<dbReference type="EMBL" id="AC003058">
    <property type="protein sequence ID" value="AAC16461.1"/>
    <property type="molecule type" value="Genomic_DNA"/>
</dbReference>
<dbReference type="EMBL" id="CP002685">
    <property type="protein sequence ID" value="AEC06867.1"/>
    <property type="molecule type" value="Genomic_DNA"/>
</dbReference>
<dbReference type="EMBL" id="AF325068">
    <property type="protein sequence ID" value="AAK17136.1"/>
    <property type="molecule type" value="mRNA"/>
</dbReference>
<dbReference type="EMBL" id="AY063873">
    <property type="protein sequence ID" value="AAL36229.1"/>
    <property type="molecule type" value="mRNA"/>
</dbReference>
<dbReference type="EMBL" id="AY117326">
    <property type="protein sequence ID" value="AAM51401.1"/>
    <property type="molecule type" value="mRNA"/>
</dbReference>
<dbReference type="EMBL" id="AY088926">
    <property type="protein sequence ID" value="AAM67232.1"/>
    <property type="molecule type" value="mRNA"/>
</dbReference>
<dbReference type="PIR" id="T01279">
    <property type="entry name" value="T01279"/>
</dbReference>
<dbReference type="RefSeq" id="NP_179521.1">
    <property type="nucleotide sequence ID" value="NM_127488.3"/>
</dbReference>
<dbReference type="SMR" id="O64564"/>
<dbReference type="FunCoup" id="O64564">
    <property type="interactions" value="11"/>
</dbReference>
<dbReference type="STRING" id="3702.O64564"/>
<dbReference type="PaxDb" id="3702-AT2G19310.1"/>
<dbReference type="ProteomicsDB" id="232105"/>
<dbReference type="EnsemblPlants" id="AT2G19310.1">
    <property type="protein sequence ID" value="AT2G19310.1"/>
    <property type="gene ID" value="AT2G19310"/>
</dbReference>
<dbReference type="GeneID" id="816448"/>
<dbReference type="Gramene" id="AT2G19310.1">
    <property type="protein sequence ID" value="AT2G19310.1"/>
    <property type="gene ID" value="AT2G19310"/>
</dbReference>
<dbReference type="KEGG" id="ath:AT2G19310"/>
<dbReference type="Araport" id="AT2G19310"/>
<dbReference type="TAIR" id="AT2G19310">
    <property type="gene designation" value="HSP18.5"/>
</dbReference>
<dbReference type="eggNOG" id="KOG0710">
    <property type="taxonomic scope" value="Eukaryota"/>
</dbReference>
<dbReference type="HOGENOM" id="CLU_046737_5_0_1"/>
<dbReference type="InParanoid" id="O64564"/>
<dbReference type="OMA" id="QICTGDN"/>
<dbReference type="PhylomeDB" id="O64564"/>
<dbReference type="PRO" id="PR:O64564"/>
<dbReference type="Proteomes" id="UP000006548">
    <property type="component" value="Chromosome 2"/>
</dbReference>
<dbReference type="ExpressionAtlas" id="O64564">
    <property type="expression patterns" value="baseline and differential"/>
</dbReference>
<dbReference type="GO" id="GO:0005737">
    <property type="term" value="C:cytoplasm"/>
    <property type="evidence" value="ECO:0007669"/>
    <property type="project" value="UniProtKB-SubCell"/>
</dbReference>
<dbReference type="GO" id="GO:0006979">
    <property type="term" value="P:response to oxidative stress"/>
    <property type="evidence" value="ECO:0000315"/>
    <property type="project" value="TAIR"/>
</dbReference>
<dbReference type="FunFam" id="2.60.40.790:FF:000095">
    <property type="entry name" value="18.5 kDa class I heat shock protein"/>
    <property type="match status" value="1"/>
</dbReference>
<dbReference type="Gene3D" id="2.60.40.790">
    <property type="match status" value="1"/>
</dbReference>
<dbReference type="InterPro" id="IPR002068">
    <property type="entry name" value="A-crystallin/Hsp20_dom"/>
</dbReference>
<dbReference type="InterPro" id="IPR008978">
    <property type="entry name" value="HSP20-like_chaperone"/>
</dbReference>
<dbReference type="InterPro" id="IPR031107">
    <property type="entry name" value="Small_HSP"/>
</dbReference>
<dbReference type="PANTHER" id="PTHR11527">
    <property type="entry name" value="HEAT-SHOCK PROTEIN 20 FAMILY MEMBER"/>
    <property type="match status" value="1"/>
</dbReference>
<dbReference type="SUPFAM" id="SSF49764">
    <property type="entry name" value="HSP20-like chaperones"/>
    <property type="match status" value="1"/>
</dbReference>
<dbReference type="PROSITE" id="PS01031">
    <property type="entry name" value="SHSP"/>
    <property type="match status" value="1"/>
</dbReference>
<protein>
    <recommendedName>
        <fullName>18.5 kDa class IV heat shock protein</fullName>
    </recommendedName>
    <alternativeName>
        <fullName>18.5 kDa heat shock protein</fullName>
        <shortName>AtHsp18.5</shortName>
    </alternativeName>
</protein>
<sequence length="162" mass="18529">MSMIPISNRRRLSPGDRIWEPFELMNTFLDFPSPALFLSHHFPSLSREIFPQTSSSTVNTQLNWTETPTAHVFKAYLPGVDQDEVIAFVDEEGYLQICTGDNKFMSRFKLPNNALTDQVTAWMEDEFLVVFVEKDASSSPPQLPEIEENRNVRVVEITGDDD</sequence>
<comment type="subunit">
    <text>May form oligomeric structures.</text>
</comment>
<comment type="subcellular location">
    <subcellularLocation>
        <location evidence="2">Cytoplasm</location>
    </subcellularLocation>
</comment>
<comment type="similarity">
    <text evidence="1 2">Belongs to the small heat shock protein (HSP20) family.</text>
</comment>
<accession>O64564</accession>
<feature type="chain" id="PRO_0000387488" description="18.5 kDa class IV heat shock protein">
    <location>
        <begin position="1"/>
        <end position="162"/>
    </location>
</feature>
<feature type="domain" description="sHSP" evidence="1">
    <location>
        <begin position="53"/>
        <end position="149"/>
    </location>
</feature>
<proteinExistence type="evidence at transcript level"/>
<organism>
    <name type="scientific">Arabidopsis thaliana</name>
    <name type="common">Mouse-ear cress</name>
    <dbReference type="NCBI Taxonomy" id="3702"/>
    <lineage>
        <taxon>Eukaryota</taxon>
        <taxon>Viridiplantae</taxon>
        <taxon>Streptophyta</taxon>
        <taxon>Embryophyta</taxon>
        <taxon>Tracheophyta</taxon>
        <taxon>Spermatophyta</taxon>
        <taxon>Magnoliopsida</taxon>
        <taxon>eudicotyledons</taxon>
        <taxon>Gunneridae</taxon>
        <taxon>Pentapetalae</taxon>
        <taxon>rosids</taxon>
        <taxon>malvids</taxon>
        <taxon>Brassicales</taxon>
        <taxon>Brassicaceae</taxon>
        <taxon>Camelineae</taxon>
        <taxon>Arabidopsis</taxon>
    </lineage>
</organism>
<reference key="1">
    <citation type="journal article" date="1999" name="Nature">
        <title>Sequence and analysis of chromosome 2 of the plant Arabidopsis thaliana.</title>
        <authorList>
            <person name="Lin X."/>
            <person name="Kaul S."/>
            <person name="Rounsley S.D."/>
            <person name="Shea T.P."/>
            <person name="Benito M.-I."/>
            <person name="Town C.D."/>
            <person name="Fujii C.Y."/>
            <person name="Mason T.M."/>
            <person name="Bowman C.L."/>
            <person name="Barnstead M.E."/>
            <person name="Feldblyum T.V."/>
            <person name="Buell C.R."/>
            <person name="Ketchum K.A."/>
            <person name="Lee J.J."/>
            <person name="Ronning C.M."/>
            <person name="Koo H.L."/>
            <person name="Moffat K.S."/>
            <person name="Cronin L.A."/>
            <person name="Shen M."/>
            <person name="Pai G."/>
            <person name="Van Aken S."/>
            <person name="Umayam L."/>
            <person name="Tallon L.J."/>
            <person name="Gill J.E."/>
            <person name="Adams M.D."/>
            <person name="Carrera A.J."/>
            <person name="Creasy T.H."/>
            <person name="Goodman H.M."/>
            <person name="Somerville C.R."/>
            <person name="Copenhaver G.P."/>
            <person name="Preuss D."/>
            <person name="Nierman W.C."/>
            <person name="White O."/>
            <person name="Eisen J.A."/>
            <person name="Salzberg S.L."/>
            <person name="Fraser C.M."/>
            <person name="Venter J.C."/>
        </authorList>
    </citation>
    <scope>NUCLEOTIDE SEQUENCE [LARGE SCALE GENOMIC DNA]</scope>
    <source>
        <strain>cv. Columbia</strain>
    </source>
</reference>
<reference key="2">
    <citation type="journal article" date="2017" name="Plant J.">
        <title>Araport11: a complete reannotation of the Arabidopsis thaliana reference genome.</title>
        <authorList>
            <person name="Cheng C.Y."/>
            <person name="Krishnakumar V."/>
            <person name="Chan A.P."/>
            <person name="Thibaud-Nissen F."/>
            <person name="Schobel S."/>
            <person name="Town C.D."/>
        </authorList>
    </citation>
    <scope>GENOME REANNOTATION</scope>
    <source>
        <strain>cv. Columbia</strain>
    </source>
</reference>
<reference key="3">
    <citation type="journal article" date="2003" name="Science">
        <title>Empirical analysis of transcriptional activity in the Arabidopsis genome.</title>
        <authorList>
            <person name="Yamada K."/>
            <person name="Lim J."/>
            <person name="Dale J.M."/>
            <person name="Chen H."/>
            <person name="Shinn P."/>
            <person name="Palm C.J."/>
            <person name="Southwick A.M."/>
            <person name="Wu H.C."/>
            <person name="Kim C.J."/>
            <person name="Nguyen M."/>
            <person name="Pham P.K."/>
            <person name="Cheuk R.F."/>
            <person name="Karlin-Newmann G."/>
            <person name="Liu S.X."/>
            <person name="Lam B."/>
            <person name="Sakano H."/>
            <person name="Wu T."/>
            <person name="Yu G."/>
            <person name="Miranda M."/>
            <person name="Quach H.L."/>
            <person name="Tripp M."/>
            <person name="Chang C.H."/>
            <person name="Lee J.M."/>
            <person name="Toriumi M.J."/>
            <person name="Chan M.M."/>
            <person name="Tang C.C."/>
            <person name="Onodera C.S."/>
            <person name="Deng J.M."/>
            <person name="Akiyama K."/>
            <person name="Ansari Y."/>
            <person name="Arakawa T."/>
            <person name="Banh J."/>
            <person name="Banno F."/>
            <person name="Bowser L."/>
            <person name="Brooks S.Y."/>
            <person name="Carninci P."/>
            <person name="Chao Q."/>
            <person name="Choy N."/>
            <person name="Enju A."/>
            <person name="Goldsmith A.D."/>
            <person name="Gurjal M."/>
            <person name="Hansen N.F."/>
            <person name="Hayashizaki Y."/>
            <person name="Johnson-Hopson C."/>
            <person name="Hsuan V.W."/>
            <person name="Iida K."/>
            <person name="Karnes M."/>
            <person name="Khan S."/>
            <person name="Koesema E."/>
            <person name="Ishida J."/>
            <person name="Jiang P.X."/>
            <person name="Jones T."/>
            <person name="Kawai J."/>
            <person name="Kamiya A."/>
            <person name="Meyers C."/>
            <person name="Nakajima M."/>
            <person name="Narusaka M."/>
            <person name="Seki M."/>
            <person name="Sakurai T."/>
            <person name="Satou M."/>
            <person name="Tamse R."/>
            <person name="Vaysberg M."/>
            <person name="Wallender E.K."/>
            <person name="Wong C."/>
            <person name="Yamamura Y."/>
            <person name="Yuan S."/>
            <person name="Shinozaki K."/>
            <person name="Davis R.W."/>
            <person name="Theologis A."/>
            <person name="Ecker J.R."/>
        </authorList>
    </citation>
    <scope>NUCLEOTIDE SEQUENCE [LARGE SCALE MRNA]</scope>
    <source>
        <strain>cv. Columbia</strain>
    </source>
</reference>
<reference key="4">
    <citation type="submission" date="2002-03" db="EMBL/GenBank/DDBJ databases">
        <title>Full-length cDNA from Arabidopsis thaliana.</title>
        <authorList>
            <person name="Brover V.V."/>
            <person name="Troukhan M.E."/>
            <person name="Alexandrov N.A."/>
            <person name="Lu Y.-P."/>
            <person name="Flavell R.B."/>
            <person name="Feldmann K.A."/>
        </authorList>
    </citation>
    <scope>NUCLEOTIDE SEQUENCE [LARGE SCALE MRNA]</scope>
</reference>
<evidence type="ECO:0000255" key="1">
    <source>
        <dbReference type="PROSITE-ProRule" id="PRU00285"/>
    </source>
</evidence>
<evidence type="ECO:0000305" key="2"/>
<name>HS185_ARATH</name>
<keyword id="KW-0963">Cytoplasm</keyword>
<keyword id="KW-1185">Reference proteome</keyword>
<keyword id="KW-0346">Stress response</keyword>
<gene>
    <name type="primary">HSP18.5</name>
    <name type="ordered locus">At2g19310</name>
    <name type="ORF">F27F23.11</name>
</gene>